<protein>
    <recommendedName>
        <fullName evidence="1">Redox-sensing transcriptional repressor Rex</fullName>
    </recommendedName>
</protein>
<evidence type="ECO:0000255" key="1">
    <source>
        <dbReference type="HAMAP-Rule" id="MF_01131"/>
    </source>
</evidence>
<evidence type="ECO:0000305" key="2"/>
<organism>
    <name type="scientific">Streptococcus pyogenes serotype M3 (strain SSI-1)</name>
    <dbReference type="NCBI Taxonomy" id="193567"/>
    <lineage>
        <taxon>Bacteria</taxon>
        <taxon>Bacillati</taxon>
        <taxon>Bacillota</taxon>
        <taxon>Bacilli</taxon>
        <taxon>Lactobacillales</taxon>
        <taxon>Streptococcaceae</taxon>
        <taxon>Streptococcus</taxon>
    </lineage>
</organism>
<accession>P0DB73</accession>
<accession>Q878S1</accession>
<accession>Q99ZR3</accession>
<feature type="chain" id="PRO_0000411374" description="Redox-sensing transcriptional repressor Rex">
    <location>
        <begin position="1"/>
        <end position="214"/>
    </location>
</feature>
<feature type="DNA-binding region" description="H-T-H motif" evidence="1">
    <location>
        <begin position="17"/>
        <end position="56"/>
    </location>
</feature>
<feature type="binding site" evidence="1">
    <location>
        <begin position="91"/>
        <end position="96"/>
    </location>
    <ligand>
        <name>NAD(+)</name>
        <dbReference type="ChEBI" id="CHEBI:57540"/>
    </ligand>
</feature>
<sequence length="214" mass="23827">MVIDKSIPKATAKRLSLYYRIFKRFHADQVEKASSKQIADAMGIDSATVRRDFSYFGELGRRGFGYDVTKLMNFFADLLNDHSTTNVILVGCGNIGRALLHYRFHDRNKMQIAMGFDTDDNALVGTKTADNIPVHGISSVKERIANTDIETAILTVPSIHAQEVTDQLIEAGIKGILSFAPVHLQVPKGVIVQSVDLTSELQTLLYFMNQNHLD</sequence>
<comment type="function">
    <text evidence="1">Modulates transcription in response to changes in cellular NADH/NAD(+) redox state.</text>
</comment>
<comment type="subunit">
    <text evidence="1">Homodimer.</text>
</comment>
<comment type="subcellular location">
    <subcellularLocation>
        <location evidence="1">Cytoplasm</location>
    </subcellularLocation>
</comment>
<comment type="similarity">
    <text evidence="1">Belongs to the transcriptional regulatory Rex family.</text>
</comment>
<comment type="sequence caution" evidence="2">
    <conflict type="erroneous initiation">
        <sequence resource="EMBL-CDS" id="BAC64075"/>
    </conflict>
</comment>
<name>REX_STRPQ</name>
<proteinExistence type="inferred from homology"/>
<reference key="1">
    <citation type="journal article" date="2003" name="Genome Res.">
        <title>Genome sequence of an M3 strain of Streptococcus pyogenes reveals a large-scale genomic rearrangement in invasive strains and new insights into phage evolution.</title>
        <authorList>
            <person name="Nakagawa I."/>
            <person name="Kurokawa K."/>
            <person name="Yamashita A."/>
            <person name="Nakata M."/>
            <person name="Tomiyasu Y."/>
            <person name="Okahashi N."/>
            <person name="Kawabata S."/>
            <person name="Yamazaki K."/>
            <person name="Shiba T."/>
            <person name="Yasunaga T."/>
            <person name="Hayashi H."/>
            <person name="Hattori M."/>
            <person name="Hamada S."/>
        </authorList>
    </citation>
    <scope>NUCLEOTIDE SEQUENCE [LARGE SCALE GENOMIC DNA]</scope>
    <source>
        <strain>SSI-1</strain>
    </source>
</reference>
<dbReference type="EMBL" id="BA000034">
    <property type="protein sequence ID" value="BAC64075.1"/>
    <property type="status" value="ALT_INIT"/>
    <property type="molecule type" value="Genomic_DNA"/>
</dbReference>
<dbReference type="RefSeq" id="WP_002984705.1">
    <property type="nucleotide sequence ID" value="NC_004606.1"/>
</dbReference>
<dbReference type="SMR" id="P0DB73"/>
<dbReference type="KEGG" id="sps:SPs0980"/>
<dbReference type="HOGENOM" id="CLU_061534_1_1_9"/>
<dbReference type="GO" id="GO:0005737">
    <property type="term" value="C:cytoplasm"/>
    <property type="evidence" value="ECO:0007669"/>
    <property type="project" value="UniProtKB-SubCell"/>
</dbReference>
<dbReference type="GO" id="GO:0003677">
    <property type="term" value="F:DNA binding"/>
    <property type="evidence" value="ECO:0007669"/>
    <property type="project" value="UniProtKB-UniRule"/>
</dbReference>
<dbReference type="GO" id="GO:0003700">
    <property type="term" value="F:DNA-binding transcription factor activity"/>
    <property type="evidence" value="ECO:0007669"/>
    <property type="project" value="UniProtKB-UniRule"/>
</dbReference>
<dbReference type="GO" id="GO:0045892">
    <property type="term" value="P:negative regulation of DNA-templated transcription"/>
    <property type="evidence" value="ECO:0007669"/>
    <property type="project" value="InterPro"/>
</dbReference>
<dbReference type="GO" id="GO:0051775">
    <property type="term" value="P:response to redox state"/>
    <property type="evidence" value="ECO:0007669"/>
    <property type="project" value="InterPro"/>
</dbReference>
<dbReference type="Gene3D" id="3.40.50.720">
    <property type="entry name" value="NAD(P)-binding Rossmann-like Domain"/>
    <property type="match status" value="1"/>
</dbReference>
<dbReference type="Gene3D" id="1.10.10.10">
    <property type="entry name" value="Winged helix-like DNA-binding domain superfamily/Winged helix DNA-binding domain"/>
    <property type="match status" value="1"/>
</dbReference>
<dbReference type="HAMAP" id="MF_01131">
    <property type="entry name" value="Rex"/>
    <property type="match status" value="1"/>
</dbReference>
<dbReference type="InterPro" id="IPR003781">
    <property type="entry name" value="CoA-bd"/>
</dbReference>
<dbReference type="InterPro" id="IPR036291">
    <property type="entry name" value="NAD(P)-bd_dom_sf"/>
</dbReference>
<dbReference type="InterPro" id="IPR009718">
    <property type="entry name" value="Rex_DNA-bd_C_dom"/>
</dbReference>
<dbReference type="InterPro" id="IPR022876">
    <property type="entry name" value="Tscrpt_rep_Rex"/>
</dbReference>
<dbReference type="InterPro" id="IPR036388">
    <property type="entry name" value="WH-like_DNA-bd_sf"/>
</dbReference>
<dbReference type="InterPro" id="IPR036390">
    <property type="entry name" value="WH_DNA-bd_sf"/>
</dbReference>
<dbReference type="NCBIfam" id="NF003988">
    <property type="entry name" value="PRK05472.1-1"/>
    <property type="match status" value="1"/>
</dbReference>
<dbReference type="NCBIfam" id="NF003989">
    <property type="entry name" value="PRK05472.1-3"/>
    <property type="match status" value="1"/>
</dbReference>
<dbReference type="NCBIfam" id="NF003991">
    <property type="entry name" value="PRK05472.1-5"/>
    <property type="match status" value="1"/>
</dbReference>
<dbReference type="NCBIfam" id="NF003994">
    <property type="entry name" value="PRK05472.2-3"/>
    <property type="match status" value="1"/>
</dbReference>
<dbReference type="NCBIfam" id="NF003995">
    <property type="entry name" value="PRK05472.2-4"/>
    <property type="match status" value="1"/>
</dbReference>
<dbReference type="NCBIfam" id="NF003996">
    <property type="entry name" value="PRK05472.2-5"/>
    <property type="match status" value="1"/>
</dbReference>
<dbReference type="PANTHER" id="PTHR35786">
    <property type="entry name" value="REDOX-SENSING TRANSCRIPTIONAL REPRESSOR REX"/>
    <property type="match status" value="1"/>
</dbReference>
<dbReference type="PANTHER" id="PTHR35786:SF1">
    <property type="entry name" value="REDOX-SENSING TRANSCRIPTIONAL REPRESSOR REX 1"/>
    <property type="match status" value="1"/>
</dbReference>
<dbReference type="Pfam" id="PF02629">
    <property type="entry name" value="CoA_binding"/>
    <property type="match status" value="1"/>
</dbReference>
<dbReference type="Pfam" id="PF06971">
    <property type="entry name" value="Put_DNA-bind_N"/>
    <property type="match status" value="1"/>
</dbReference>
<dbReference type="SMART" id="SM00881">
    <property type="entry name" value="CoA_binding"/>
    <property type="match status" value="1"/>
</dbReference>
<dbReference type="SUPFAM" id="SSF51735">
    <property type="entry name" value="NAD(P)-binding Rossmann-fold domains"/>
    <property type="match status" value="1"/>
</dbReference>
<dbReference type="SUPFAM" id="SSF46785">
    <property type="entry name" value="Winged helix' DNA-binding domain"/>
    <property type="match status" value="1"/>
</dbReference>
<gene>
    <name evidence="1" type="primary">rex</name>
    <name type="ordered locus">SPs0980</name>
</gene>
<keyword id="KW-0963">Cytoplasm</keyword>
<keyword id="KW-0238">DNA-binding</keyword>
<keyword id="KW-0520">NAD</keyword>
<keyword id="KW-0678">Repressor</keyword>
<keyword id="KW-0804">Transcription</keyword>
<keyword id="KW-0805">Transcription regulation</keyword>